<proteinExistence type="inferred from homology"/>
<keyword id="KW-0687">Ribonucleoprotein</keyword>
<keyword id="KW-0689">Ribosomal protein</keyword>
<name>RS16_METEP</name>
<sequence>MSLKIRLTRGGAKKRPYYRIVIADARAPRDGRFIDKVGAYDPMKAKDDPARIVLDNEKIQSWLAKGAQPTDRVLRFLDAAGLAKRPTRNNPQKAEPGEKAKERAAKRAEKAAAPAEDAAA</sequence>
<dbReference type="EMBL" id="CP000908">
    <property type="protein sequence ID" value="ABY29067.1"/>
    <property type="molecule type" value="Genomic_DNA"/>
</dbReference>
<dbReference type="RefSeq" id="WP_003601547.1">
    <property type="nucleotide sequence ID" value="NC_010172.1"/>
</dbReference>
<dbReference type="SMR" id="A9W0G1"/>
<dbReference type="GeneID" id="72987948"/>
<dbReference type="KEGG" id="mex:Mext_0653"/>
<dbReference type="eggNOG" id="COG0228">
    <property type="taxonomic scope" value="Bacteria"/>
</dbReference>
<dbReference type="HOGENOM" id="CLU_100590_3_1_5"/>
<dbReference type="BioCyc" id="MEXT419610:MEXT_RS03230-MONOMER"/>
<dbReference type="GO" id="GO:0005737">
    <property type="term" value="C:cytoplasm"/>
    <property type="evidence" value="ECO:0007669"/>
    <property type="project" value="UniProtKB-ARBA"/>
</dbReference>
<dbReference type="GO" id="GO:0015935">
    <property type="term" value="C:small ribosomal subunit"/>
    <property type="evidence" value="ECO:0007669"/>
    <property type="project" value="TreeGrafter"/>
</dbReference>
<dbReference type="GO" id="GO:0003735">
    <property type="term" value="F:structural constituent of ribosome"/>
    <property type="evidence" value="ECO:0007669"/>
    <property type="project" value="InterPro"/>
</dbReference>
<dbReference type="GO" id="GO:0006412">
    <property type="term" value="P:translation"/>
    <property type="evidence" value="ECO:0007669"/>
    <property type="project" value="UniProtKB-UniRule"/>
</dbReference>
<dbReference type="Gene3D" id="3.30.1320.10">
    <property type="match status" value="1"/>
</dbReference>
<dbReference type="HAMAP" id="MF_00385">
    <property type="entry name" value="Ribosomal_bS16"/>
    <property type="match status" value="1"/>
</dbReference>
<dbReference type="InterPro" id="IPR000307">
    <property type="entry name" value="Ribosomal_bS16"/>
</dbReference>
<dbReference type="InterPro" id="IPR020592">
    <property type="entry name" value="Ribosomal_bS16_CS"/>
</dbReference>
<dbReference type="InterPro" id="IPR023803">
    <property type="entry name" value="Ribosomal_bS16_dom_sf"/>
</dbReference>
<dbReference type="NCBIfam" id="TIGR00002">
    <property type="entry name" value="S16"/>
    <property type="match status" value="1"/>
</dbReference>
<dbReference type="PANTHER" id="PTHR12919">
    <property type="entry name" value="30S RIBOSOMAL PROTEIN S16"/>
    <property type="match status" value="1"/>
</dbReference>
<dbReference type="PANTHER" id="PTHR12919:SF20">
    <property type="entry name" value="SMALL RIBOSOMAL SUBUNIT PROTEIN BS16M"/>
    <property type="match status" value="1"/>
</dbReference>
<dbReference type="Pfam" id="PF00886">
    <property type="entry name" value="Ribosomal_S16"/>
    <property type="match status" value="1"/>
</dbReference>
<dbReference type="SUPFAM" id="SSF54565">
    <property type="entry name" value="Ribosomal protein S16"/>
    <property type="match status" value="1"/>
</dbReference>
<dbReference type="PROSITE" id="PS00732">
    <property type="entry name" value="RIBOSOMAL_S16"/>
    <property type="match status" value="1"/>
</dbReference>
<feature type="chain" id="PRO_1000196432" description="Small ribosomal subunit protein bS16">
    <location>
        <begin position="1"/>
        <end position="120"/>
    </location>
</feature>
<feature type="region of interest" description="Disordered" evidence="2">
    <location>
        <begin position="81"/>
        <end position="120"/>
    </location>
</feature>
<feature type="compositionally biased region" description="Basic and acidic residues" evidence="2">
    <location>
        <begin position="95"/>
        <end position="110"/>
    </location>
</feature>
<feature type="compositionally biased region" description="Low complexity" evidence="2">
    <location>
        <begin position="111"/>
        <end position="120"/>
    </location>
</feature>
<reference key="1">
    <citation type="submission" date="2007-12" db="EMBL/GenBank/DDBJ databases">
        <title>Complete sequence of Methylobacterium extorquens PA1.</title>
        <authorList>
            <consortium name="US DOE Joint Genome Institute"/>
            <person name="Copeland A."/>
            <person name="Lucas S."/>
            <person name="Lapidus A."/>
            <person name="Barry K."/>
            <person name="Glavina del Rio T."/>
            <person name="Dalin E."/>
            <person name="Tice H."/>
            <person name="Pitluck S."/>
            <person name="Saunders E."/>
            <person name="Brettin T."/>
            <person name="Bruce D."/>
            <person name="Detter J.C."/>
            <person name="Han C."/>
            <person name="Schmutz J."/>
            <person name="Larimer F."/>
            <person name="Land M."/>
            <person name="Hauser L."/>
            <person name="Kyrpides N."/>
            <person name="Kim E."/>
            <person name="Marx C."/>
            <person name="Richardson P."/>
        </authorList>
    </citation>
    <scope>NUCLEOTIDE SEQUENCE [LARGE SCALE GENOMIC DNA]</scope>
    <source>
        <strain>PA1</strain>
    </source>
</reference>
<protein>
    <recommendedName>
        <fullName evidence="1">Small ribosomal subunit protein bS16</fullName>
    </recommendedName>
    <alternativeName>
        <fullName evidence="3">30S ribosomal protein S16</fullName>
    </alternativeName>
</protein>
<organism>
    <name type="scientific">Methylorubrum extorquens (strain PA1)</name>
    <name type="common">Methylobacterium extorquens</name>
    <dbReference type="NCBI Taxonomy" id="419610"/>
    <lineage>
        <taxon>Bacteria</taxon>
        <taxon>Pseudomonadati</taxon>
        <taxon>Pseudomonadota</taxon>
        <taxon>Alphaproteobacteria</taxon>
        <taxon>Hyphomicrobiales</taxon>
        <taxon>Methylobacteriaceae</taxon>
        <taxon>Methylorubrum</taxon>
    </lineage>
</organism>
<gene>
    <name evidence="1" type="primary">rpsP</name>
    <name type="ordered locus">Mext_0653</name>
</gene>
<accession>A9W0G1</accession>
<evidence type="ECO:0000255" key="1">
    <source>
        <dbReference type="HAMAP-Rule" id="MF_00385"/>
    </source>
</evidence>
<evidence type="ECO:0000256" key="2">
    <source>
        <dbReference type="SAM" id="MobiDB-lite"/>
    </source>
</evidence>
<evidence type="ECO:0000305" key="3"/>
<comment type="similarity">
    <text evidence="1">Belongs to the bacterial ribosomal protein bS16 family.</text>
</comment>